<evidence type="ECO:0000255" key="1">
    <source>
        <dbReference type="HAMAP-Rule" id="MF_01210"/>
    </source>
</evidence>
<gene>
    <name evidence="1" type="primary">carB</name>
    <name type="ordered locus">HD_0233</name>
</gene>
<feature type="chain" id="PRO_0000145008" description="Carbamoyl phosphate synthase large chain">
    <location>
        <begin position="1"/>
        <end position="1075"/>
    </location>
</feature>
<feature type="domain" description="ATP-grasp 1" evidence="1">
    <location>
        <begin position="133"/>
        <end position="328"/>
    </location>
</feature>
<feature type="domain" description="ATP-grasp 2" evidence="1">
    <location>
        <begin position="673"/>
        <end position="864"/>
    </location>
</feature>
<feature type="domain" description="MGS-like" evidence="1">
    <location>
        <begin position="931"/>
        <end position="1070"/>
    </location>
</feature>
<feature type="region of interest" description="Carboxyphosphate synthetic domain" evidence="1">
    <location>
        <begin position="1"/>
        <end position="403"/>
    </location>
</feature>
<feature type="region of interest" description="Oligomerization domain" evidence="1">
    <location>
        <begin position="404"/>
        <end position="548"/>
    </location>
</feature>
<feature type="region of interest" description="Carbamoyl phosphate synthetic domain" evidence="1">
    <location>
        <begin position="549"/>
        <end position="930"/>
    </location>
</feature>
<feature type="region of interest" description="Allosteric domain" evidence="1">
    <location>
        <begin position="931"/>
        <end position="1075"/>
    </location>
</feature>
<feature type="binding site" evidence="1">
    <location>
        <position position="129"/>
    </location>
    <ligand>
        <name>ATP</name>
        <dbReference type="ChEBI" id="CHEBI:30616"/>
        <label>1</label>
    </ligand>
</feature>
<feature type="binding site" evidence="1">
    <location>
        <position position="169"/>
    </location>
    <ligand>
        <name>ATP</name>
        <dbReference type="ChEBI" id="CHEBI:30616"/>
        <label>1</label>
    </ligand>
</feature>
<feature type="binding site" evidence="1">
    <location>
        <position position="175"/>
    </location>
    <ligand>
        <name>ATP</name>
        <dbReference type="ChEBI" id="CHEBI:30616"/>
        <label>1</label>
    </ligand>
</feature>
<feature type="binding site" evidence="1">
    <location>
        <position position="176"/>
    </location>
    <ligand>
        <name>ATP</name>
        <dbReference type="ChEBI" id="CHEBI:30616"/>
        <label>1</label>
    </ligand>
</feature>
<feature type="binding site" evidence="1">
    <location>
        <position position="208"/>
    </location>
    <ligand>
        <name>ATP</name>
        <dbReference type="ChEBI" id="CHEBI:30616"/>
        <label>1</label>
    </ligand>
</feature>
<feature type="binding site" evidence="1">
    <location>
        <position position="210"/>
    </location>
    <ligand>
        <name>ATP</name>
        <dbReference type="ChEBI" id="CHEBI:30616"/>
        <label>1</label>
    </ligand>
</feature>
<feature type="binding site" evidence="1">
    <location>
        <position position="215"/>
    </location>
    <ligand>
        <name>ATP</name>
        <dbReference type="ChEBI" id="CHEBI:30616"/>
        <label>1</label>
    </ligand>
</feature>
<feature type="binding site" evidence="1">
    <location>
        <position position="241"/>
    </location>
    <ligand>
        <name>ATP</name>
        <dbReference type="ChEBI" id="CHEBI:30616"/>
        <label>1</label>
    </ligand>
</feature>
<feature type="binding site" evidence="1">
    <location>
        <position position="242"/>
    </location>
    <ligand>
        <name>ATP</name>
        <dbReference type="ChEBI" id="CHEBI:30616"/>
        <label>1</label>
    </ligand>
</feature>
<feature type="binding site" evidence="1">
    <location>
        <position position="243"/>
    </location>
    <ligand>
        <name>ATP</name>
        <dbReference type="ChEBI" id="CHEBI:30616"/>
        <label>1</label>
    </ligand>
</feature>
<feature type="binding site" evidence="1">
    <location>
        <position position="285"/>
    </location>
    <ligand>
        <name>ATP</name>
        <dbReference type="ChEBI" id="CHEBI:30616"/>
        <label>1</label>
    </ligand>
</feature>
<feature type="binding site" evidence="1">
    <location>
        <position position="285"/>
    </location>
    <ligand>
        <name>Mg(2+)</name>
        <dbReference type="ChEBI" id="CHEBI:18420"/>
        <label>1</label>
    </ligand>
</feature>
<feature type="binding site" evidence="1">
    <location>
        <position position="285"/>
    </location>
    <ligand>
        <name>Mn(2+)</name>
        <dbReference type="ChEBI" id="CHEBI:29035"/>
        <label>1</label>
    </ligand>
</feature>
<feature type="binding site" evidence="1">
    <location>
        <position position="299"/>
    </location>
    <ligand>
        <name>ATP</name>
        <dbReference type="ChEBI" id="CHEBI:30616"/>
        <label>1</label>
    </ligand>
</feature>
<feature type="binding site" evidence="1">
    <location>
        <position position="299"/>
    </location>
    <ligand>
        <name>Mg(2+)</name>
        <dbReference type="ChEBI" id="CHEBI:18420"/>
        <label>1</label>
    </ligand>
</feature>
<feature type="binding site" evidence="1">
    <location>
        <position position="299"/>
    </location>
    <ligand>
        <name>Mg(2+)</name>
        <dbReference type="ChEBI" id="CHEBI:18420"/>
        <label>2</label>
    </ligand>
</feature>
<feature type="binding site" evidence="1">
    <location>
        <position position="299"/>
    </location>
    <ligand>
        <name>Mn(2+)</name>
        <dbReference type="ChEBI" id="CHEBI:29035"/>
        <label>1</label>
    </ligand>
</feature>
<feature type="binding site" evidence="1">
    <location>
        <position position="299"/>
    </location>
    <ligand>
        <name>Mn(2+)</name>
        <dbReference type="ChEBI" id="CHEBI:29035"/>
        <label>2</label>
    </ligand>
</feature>
<feature type="binding site" evidence="1">
    <location>
        <position position="301"/>
    </location>
    <ligand>
        <name>Mg(2+)</name>
        <dbReference type="ChEBI" id="CHEBI:18420"/>
        <label>2</label>
    </ligand>
</feature>
<feature type="binding site" evidence="1">
    <location>
        <position position="301"/>
    </location>
    <ligand>
        <name>Mn(2+)</name>
        <dbReference type="ChEBI" id="CHEBI:29035"/>
        <label>2</label>
    </ligand>
</feature>
<feature type="binding site" evidence="1">
    <location>
        <position position="709"/>
    </location>
    <ligand>
        <name>ATP</name>
        <dbReference type="ChEBI" id="CHEBI:30616"/>
        <label>2</label>
    </ligand>
</feature>
<feature type="binding site" evidence="1">
    <location>
        <position position="748"/>
    </location>
    <ligand>
        <name>ATP</name>
        <dbReference type="ChEBI" id="CHEBI:30616"/>
        <label>2</label>
    </ligand>
</feature>
<feature type="binding site" evidence="1">
    <location>
        <position position="750"/>
    </location>
    <ligand>
        <name>ATP</name>
        <dbReference type="ChEBI" id="CHEBI:30616"/>
        <label>2</label>
    </ligand>
</feature>
<feature type="binding site" evidence="1">
    <location>
        <position position="755"/>
    </location>
    <ligand>
        <name>ATP</name>
        <dbReference type="ChEBI" id="CHEBI:30616"/>
        <label>2</label>
    </ligand>
</feature>
<feature type="binding site" evidence="1">
    <location>
        <position position="780"/>
    </location>
    <ligand>
        <name>ATP</name>
        <dbReference type="ChEBI" id="CHEBI:30616"/>
        <label>2</label>
    </ligand>
</feature>
<feature type="binding site" evidence="1">
    <location>
        <position position="781"/>
    </location>
    <ligand>
        <name>ATP</name>
        <dbReference type="ChEBI" id="CHEBI:30616"/>
        <label>2</label>
    </ligand>
</feature>
<feature type="binding site" evidence="1">
    <location>
        <position position="782"/>
    </location>
    <ligand>
        <name>ATP</name>
        <dbReference type="ChEBI" id="CHEBI:30616"/>
        <label>2</label>
    </ligand>
</feature>
<feature type="binding site" evidence="1">
    <location>
        <position position="783"/>
    </location>
    <ligand>
        <name>ATP</name>
        <dbReference type="ChEBI" id="CHEBI:30616"/>
        <label>2</label>
    </ligand>
</feature>
<feature type="binding site" evidence="1">
    <location>
        <position position="823"/>
    </location>
    <ligand>
        <name>ATP</name>
        <dbReference type="ChEBI" id="CHEBI:30616"/>
        <label>2</label>
    </ligand>
</feature>
<feature type="binding site" evidence="1">
    <location>
        <position position="823"/>
    </location>
    <ligand>
        <name>Mg(2+)</name>
        <dbReference type="ChEBI" id="CHEBI:18420"/>
        <label>3</label>
    </ligand>
</feature>
<feature type="binding site" evidence="1">
    <location>
        <position position="823"/>
    </location>
    <ligand>
        <name>Mn(2+)</name>
        <dbReference type="ChEBI" id="CHEBI:29035"/>
        <label>3</label>
    </ligand>
</feature>
<feature type="binding site" evidence="1">
    <location>
        <position position="835"/>
    </location>
    <ligand>
        <name>ATP</name>
        <dbReference type="ChEBI" id="CHEBI:30616"/>
        <label>2</label>
    </ligand>
</feature>
<feature type="binding site" evidence="1">
    <location>
        <position position="835"/>
    </location>
    <ligand>
        <name>Mg(2+)</name>
        <dbReference type="ChEBI" id="CHEBI:18420"/>
        <label>3</label>
    </ligand>
</feature>
<feature type="binding site" evidence="1">
    <location>
        <position position="835"/>
    </location>
    <ligand>
        <name>Mg(2+)</name>
        <dbReference type="ChEBI" id="CHEBI:18420"/>
        <label>4</label>
    </ligand>
</feature>
<feature type="binding site" evidence="1">
    <location>
        <position position="835"/>
    </location>
    <ligand>
        <name>Mn(2+)</name>
        <dbReference type="ChEBI" id="CHEBI:29035"/>
        <label>3</label>
    </ligand>
</feature>
<feature type="binding site" evidence="1">
    <location>
        <position position="835"/>
    </location>
    <ligand>
        <name>Mn(2+)</name>
        <dbReference type="ChEBI" id="CHEBI:29035"/>
        <label>4</label>
    </ligand>
</feature>
<feature type="binding site" evidence="1">
    <location>
        <position position="837"/>
    </location>
    <ligand>
        <name>Mg(2+)</name>
        <dbReference type="ChEBI" id="CHEBI:18420"/>
        <label>4</label>
    </ligand>
</feature>
<feature type="binding site" evidence="1">
    <location>
        <position position="837"/>
    </location>
    <ligand>
        <name>Mn(2+)</name>
        <dbReference type="ChEBI" id="CHEBI:29035"/>
        <label>4</label>
    </ligand>
</feature>
<organism>
    <name type="scientific">Haemophilus ducreyi (strain 35000HP / ATCC 700724)</name>
    <dbReference type="NCBI Taxonomy" id="233412"/>
    <lineage>
        <taxon>Bacteria</taxon>
        <taxon>Pseudomonadati</taxon>
        <taxon>Pseudomonadota</taxon>
        <taxon>Gammaproteobacteria</taxon>
        <taxon>Pasteurellales</taxon>
        <taxon>Pasteurellaceae</taxon>
        <taxon>Haemophilus</taxon>
    </lineage>
</organism>
<dbReference type="EC" id="6.3.4.16" evidence="1"/>
<dbReference type="EC" id="6.3.5.5" evidence="1"/>
<dbReference type="EMBL" id="AE017143">
    <property type="protein sequence ID" value="AAP95220.1"/>
    <property type="molecule type" value="Genomic_DNA"/>
</dbReference>
<dbReference type="RefSeq" id="WP_010944273.1">
    <property type="nucleotide sequence ID" value="NC_002940.2"/>
</dbReference>
<dbReference type="SMR" id="Q7VP67"/>
<dbReference type="STRING" id="233412.HD_0233"/>
<dbReference type="KEGG" id="hdu:HD_0233"/>
<dbReference type="eggNOG" id="COG0458">
    <property type="taxonomic scope" value="Bacteria"/>
</dbReference>
<dbReference type="HOGENOM" id="CLU_000513_1_3_6"/>
<dbReference type="OrthoDB" id="9804197at2"/>
<dbReference type="UniPathway" id="UPA00068">
    <property type="reaction ID" value="UER00171"/>
</dbReference>
<dbReference type="UniPathway" id="UPA00070">
    <property type="reaction ID" value="UER00115"/>
</dbReference>
<dbReference type="Proteomes" id="UP000001022">
    <property type="component" value="Chromosome"/>
</dbReference>
<dbReference type="GO" id="GO:0005737">
    <property type="term" value="C:cytoplasm"/>
    <property type="evidence" value="ECO:0007669"/>
    <property type="project" value="TreeGrafter"/>
</dbReference>
<dbReference type="GO" id="GO:0005524">
    <property type="term" value="F:ATP binding"/>
    <property type="evidence" value="ECO:0007669"/>
    <property type="project" value="UniProtKB-UniRule"/>
</dbReference>
<dbReference type="GO" id="GO:0004087">
    <property type="term" value="F:carbamoyl-phosphate synthase (ammonia) activity"/>
    <property type="evidence" value="ECO:0007669"/>
    <property type="project" value="RHEA"/>
</dbReference>
<dbReference type="GO" id="GO:0004088">
    <property type="term" value="F:carbamoyl-phosphate synthase (glutamine-hydrolyzing) activity"/>
    <property type="evidence" value="ECO:0007669"/>
    <property type="project" value="UniProtKB-UniRule"/>
</dbReference>
<dbReference type="GO" id="GO:0046872">
    <property type="term" value="F:metal ion binding"/>
    <property type="evidence" value="ECO:0007669"/>
    <property type="project" value="UniProtKB-KW"/>
</dbReference>
<dbReference type="GO" id="GO:0044205">
    <property type="term" value="P:'de novo' UMP biosynthetic process"/>
    <property type="evidence" value="ECO:0007669"/>
    <property type="project" value="UniProtKB-UniRule"/>
</dbReference>
<dbReference type="GO" id="GO:0006541">
    <property type="term" value="P:glutamine metabolic process"/>
    <property type="evidence" value="ECO:0007669"/>
    <property type="project" value="TreeGrafter"/>
</dbReference>
<dbReference type="GO" id="GO:0006526">
    <property type="term" value="P:L-arginine biosynthetic process"/>
    <property type="evidence" value="ECO:0007669"/>
    <property type="project" value="UniProtKB-UniRule"/>
</dbReference>
<dbReference type="CDD" id="cd01424">
    <property type="entry name" value="MGS_CPS_II"/>
    <property type="match status" value="1"/>
</dbReference>
<dbReference type="FunFam" id="1.10.1030.10:FF:000002">
    <property type="entry name" value="Carbamoyl-phosphate synthase large chain"/>
    <property type="match status" value="1"/>
</dbReference>
<dbReference type="FunFam" id="3.30.1490.20:FF:000001">
    <property type="entry name" value="Carbamoyl-phosphate synthase large chain"/>
    <property type="match status" value="1"/>
</dbReference>
<dbReference type="FunFam" id="3.30.470.20:FF:000007">
    <property type="entry name" value="Carbamoyl-phosphate synthase large chain"/>
    <property type="match status" value="1"/>
</dbReference>
<dbReference type="FunFam" id="3.30.470.20:FF:000013">
    <property type="entry name" value="Carbamoyl-phosphate synthase large chain"/>
    <property type="match status" value="1"/>
</dbReference>
<dbReference type="FunFam" id="3.40.50.20:FF:000001">
    <property type="entry name" value="Carbamoyl-phosphate synthase large chain"/>
    <property type="match status" value="1"/>
</dbReference>
<dbReference type="FunFam" id="3.40.50.20:FF:000003">
    <property type="entry name" value="Carbamoyl-phosphate synthase large chain"/>
    <property type="match status" value="1"/>
</dbReference>
<dbReference type="Gene3D" id="3.40.50.20">
    <property type="match status" value="2"/>
</dbReference>
<dbReference type="Gene3D" id="3.30.470.20">
    <property type="entry name" value="ATP-grasp fold, B domain"/>
    <property type="match status" value="2"/>
</dbReference>
<dbReference type="Gene3D" id="1.10.1030.10">
    <property type="entry name" value="Carbamoyl-phosphate synthetase, large subunit oligomerisation domain"/>
    <property type="match status" value="1"/>
</dbReference>
<dbReference type="Gene3D" id="3.40.50.1380">
    <property type="entry name" value="Methylglyoxal synthase-like domain"/>
    <property type="match status" value="1"/>
</dbReference>
<dbReference type="HAMAP" id="MF_01210_A">
    <property type="entry name" value="CPSase_L_chain_A"/>
    <property type="match status" value="1"/>
</dbReference>
<dbReference type="HAMAP" id="MF_01210_B">
    <property type="entry name" value="CPSase_L_chain_B"/>
    <property type="match status" value="1"/>
</dbReference>
<dbReference type="InterPro" id="IPR011761">
    <property type="entry name" value="ATP-grasp"/>
</dbReference>
<dbReference type="InterPro" id="IPR006275">
    <property type="entry name" value="CarbamoylP_synth_lsu"/>
</dbReference>
<dbReference type="InterPro" id="IPR005480">
    <property type="entry name" value="CarbamoylP_synth_lsu_oligo"/>
</dbReference>
<dbReference type="InterPro" id="IPR036897">
    <property type="entry name" value="CarbamoylP_synth_lsu_oligo_sf"/>
</dbReference>
<dbReference type="InterPro" id="IPR005479">
    <property type="entry name" value="CbamoylP_synth_lsu-like_ATP-bd"/>
</dbReference>
<dbReference type="InterPro" id="IPR005483">
    <property type="entry name" value="CbamoylP_synth_lsu_CPSase_dom"/>
</dbReference>
<dbReference type="InterPro" id="IPR011607">
    <property type="entry name" value="MGS-like_dom"/>
</dbReference>
<dbReference type="InterPro" id="IPR036914">
    <property type="entry name" value="MGS-like_dom_sf"/>
</dbReference>
<dbReference type="InterPro" id="IPR033937">
    <property type="entry name" value="MGS_CPS_CarB"/>
</dbReference>
<dbReference type="InterPro" id="IPR016185">
    <property type="entry name" value="PreATP-grasp_dom_sf"/>
</dbReference>
<dbReference type="NCBIfam" id="TIGR01369">
    <property type="entry name" value="CPSaseII_lrg"/>
    <property type="match status" value="1"/>
</dbReference>
<dbReference type="NCBIfam" id="NF003671">
    <property type="entry name" value="PRK05294.1"/>
    <property type="match status" value="1"/>
</dbReference>
<dbReference type="NCBIfam" id="NF009455">
    <property type="entry name" value="PRK12815.1"/>
    <property type="match status" value="1"/>
</dbReference>
<dbReference type="PANTHER" id="PTHR11405:SF53">
    <property type="entry name" value="CARBAMOYL-PHOSPHATE SYNTHASE [AMMONIA], MITOCHONDRIAL"/>
    <property type="match status" value="1"/>
</dbReference>
<dbReference type="PANTHER" id="PTHR11405">
    <property type="entry name" value="CARBAMOYLTRANSFERASE FAMILY MEMBER"/>
    <property type="match status" value="1"/>
</dbReference>
<dbReference type="Pfam" id="PF02786">
    <property type="entry name" value="CPSase_L_D2"/>
    <property type="match status" value="2"/>
</dbReference>
<dbReference type="Pfam" id="PF02787">
    <property type="entry name" value="CPSase_L_D3"/>
    <property type="match status" value="1"/>
</dbReference>
<dbReference type="Pfam" id="PF02142">
    <property type="entry name" value="MGS"/>
    <property type="match status" value="1"/>
</dbReference>
<dbReference type="PRINTS" id="PR00098">
    <property type="entry name" value="CPSASE"/>
</dbReference>
<dbReference type="SMART" id="SM01096">
    <property type="entry name" value="CPSase_L_D3"/>
    <property type="match status" value="1"/>
</dbReference>
<dbReference type="SMART" id="SM00851">
    <property type="entry name" value="MGS"/>
    <property type="match status" value="1"/>
</dbReference>
<dbReference type="SUPFAM" id="SSF48108">
    <property type="entry name" value="Carbamoyl phosphate synthetase, large subunit connection domain"/>
    <property type="match status" value="1"/>
</dbReference>
<dbReference type="SUPFAM" id="SSF56059">
    <property type="entry name" value="Glutathione synthetase ATP-binding domain-like"/>
    <property type="match status" value="2"/>
</dbReference>
<dbReference type="SUPFAM" id="SSF52335">
    <property type="entry name" value="Methylglyoxal synthase-like"/>
    <property type="match status" value="1"/>
</dbReference>
<dbReference type="SUPFAM" id="SSF52440">
    <property type="entry name" value="PreATP-grasp domain"/>
    <property type="match status" value="2"/>
</dbReference>
<dbReference type="PROSITE" id="PS50975">
    <property type="entry name" value="ATP_GRASP"/>
    <property type="match status" value="2"/>
</dbReference>
<dbReference type="PROSITE" id="PS00866">
    <property type="entry name" value="CPSASE_1"/>
    <property type="match status" value="1"/>
</dbReference>
<dbReference type="PROSITE" id="PS00867">
    <property type="entry name" value="CPSASE_2"/>
    <property type="match status" value="2"/>
</dbReference>
<dbReference type="PROSITE" id="PS51855">
    <property type="entry name" value="MGS"/>
    <property type="match status" value="1"/>
</dbReference>
<reference key="1">
    <citation type="submission" date="2003-06" db="EMBL/GenBank/DDBJ databases">
        <title>The complete genome sequence of Haemophilus ducreyi.</title>
        <authorList>
            <person name="Munson R.S. Jr."/>
            <person name="Ray W.C."/>
            <person name="Mahairas G."/>
            <person name="Sabo P."/>
            <person name="Mungur R."/>
            <person name="Johnson L."/>
            <person name="Nguyen D."/>
            <person name="Wang J."/>
            <person name="Forst C."/>
            <person name="Hood L."/>
        </authorList>
    </citation>
    <scope>NUCLEOTIDE SEQUENCE [LARGE SCALE GENOMIC DNA]</scope>
    <source>
        <strain>35000HP / ATCC 700724</strain>
    </source>
</reference>
<proteinExistence type="inferred from homology"/>
<accession>Q7VP67</accession>
<sequence length="1075" mass="118332">MPKRTDINTILIIGAGPIIIGQACEFDYSGAQAVKALREEGYKVILVNSNPATIMTDPDMADVTYIEPIQWQTLEKIIEKERPDAILPTMGGQTALNCALALSKNGVLKKYGVELIGATEDAIDKAEDRGRFKDAMTKIGLNTPKSFICHSFEEAWQAQEQVGFPTLIRPSFTMGGSGGGIAYNRDEFQAICERGFEASPTHELLIEQSVLGWKEYEMEVVRDKADNCIIVCSIENFDPMGVHTGDSITVAPAQTLTDKEYQIMRNASLAVLREIGVDTGGSNVQFAINPANGEMIVIEMNPRVSRSSALASKATGFPIAKVAAKLAVGYTLNELRNDITGGLIPTSFEPTIDYVVTKVPRFAFEKFPQADDRLTTQMKSVGEVMAMGRTFQESLQKALRGLEIGICGFNLRSESPETIRRELANPGPNRILYVADAFGAGFSLEEVHHYSKIDPWFLIQIQDLVQEEMALEKRAFTELDYAELRRLKRKGFSDKRIAQLIKVSESDVRAKRYALNLHPVYKRVDTCAGEFKADTAYLYSTYEDECEAKPTTRQKVMILGGGPNRIGQGIEFDYCCVHAALALREAGFETIMVNCNPETVSTDFDTSDRLYFEPLTLEDVLEIIYKEQPWGVIVHYGGQTPLKLAHALEQNGVNIIGTSADSIDAAEDRARFQKILTDLGLKQPNNRTARNAEEAVKLAEEVGYPLVVRPSYVLGGRAMQIVYNVDELNNYMQEAVSVSNDSPILLDHFLKNAIEVDVDCICDSEQVLIGGIMQHVEQAGIHSGDSACSLPAYSLTNEVQGEIRRQTSAMAFALGVKGLMNVQFAVQNETIYVLEVNPRASRTVPFVSKATGNPLAKIAALVMAGKSLAEQNATTEIIPPYFSVKEAVFPFIKFPGVDTTLSPEMRSTGEVMGTGQSFAEAYYKAQLGAGERIPSTGKVFLSIADEDKPQIIRVAQYLQAEGYGLCATIGTAQYLRENGVGVQIINKVREGRPNIVDSIKNNEIAMIINTVNNLPESIKEAQEIRRNALKLHIPTYTTLAAAEAISEAVRHINKYDVNALQQLHLSSALANQITR</sequence>
<comment type="function">
    <text evidence="1">Large subunit of the glutamine-dependent carbamoyl phosphate synthetase (CPSase). CPSase catalyzes the formation of carbamoyl phosphate from the ammonia moiety of glutamine, carbonate, and phosphate donated by ATP, constituting the first step of 2 biosynthetic pathways, one leading to arginine and/or urea and the other to pyrimidine nucleotides. The large subunit (synthetase) binds the substrates ammonia (free or transferred from glutamine from the small subunit), hydrogencarbonate and ATP and carries out an ATP-coupled ligase reaction, activating hydrogencarbonate by forming carboxy phosphate which reacts with ammonia to form carbamoyl phosphate.</text>
</comment>
<comment type="catalytic activity">
    <reaction evidence="1">
        <text>hydrogencarbonate + L-glutamine + 2 ATP + H2O = carbamoyl phosphate + L-glutamate + 2 ADP + phosphate + 2 H(+)</text>
        <dbReference type="Rhea" id="RHEA:18633"/>
        <dbReference type="ChEBI" id="CHEBI:15377"/>
        <dbReference type="ChEBI" id="CHEBI:15378"/>
        <dbReference type="ChEBI" id="CHEBI:17544"/>
        <dbReference type="ChEBI" id="CHEBI:29985"/>
        <dbReference type="ChEBI" id="CHEBI:30616"/>
        <dbReference type="ChEBI" id="CHEBI:43474"/>
        <dbReference type="ChEBI" id="CHEBI:58228"/>
        <dbReference type="ChEBI" id="CHEBI:58359"/>
        <dbReference type="ChEBI" id="CHEBI:456216"/>
        <dbReference type="EC" id="6.3.5.5"/>
    </reaction>
</comment>
<comment type="catalytic activity">
    <molecule>Carbamoyl phosphate synthase large chain</molecule>
    <reaction evidence="1">
        <text>hydrogencarbonate + NH4(+) + 2 ATP = carbamoyl phosphate + 2 ADP + phosphate + 2 H(+)</text>
        <dbReference type="Rhea" id="RHEA:18029"/>
        <dbReference type="ChEBI" id="CHEBI:15378"/>
        <dbReference type="ChEBI" id="CHEBI:17544"/>
        <dbReference type="ChEBI" id="CHEBI:28938"/>
        <dbReference type="ChEBI" id="CHEBI:30616"/>
        <dbReference type="ChEBI" id="CHEBI:43474"/>
        <dbReference type="ChEBI" id="CHEBI:58228"/>
        <dbReference type="ChEBI" id="CHEBI:456216"/>
        <dbReference type="EC" id="6.3.4.16"/>
    </reaction>
</comment>
<comment type="cofactor">
    <cofactor evidence="1">
        <name>Mg(2+)</name>
        <dbReference type="ChEBI" id="CHEBI:18420"/>
    </cofactor>
    <cofactor evidence="1">
        <name>Mn(2+)</name>
        <dbReference type="ChEBI" id="CHEBI:29035"/>
    </cofactor>
    <text evidence="1">Binds 4 Mg(2+) or Mn(2+) ions per subunit.</text>
</comment>
<comment type="pathway">
    <text evidence="1">Amino-acid biosynthesis; L-arginine biosynthesis; carbamoyl phosphate from bicarbonate: step 1/1.</text>
</comment>
<comment type="pathway">
    <text evidence="1">Pyrimidine metabolism; UMP biosynthesis via de novo pathway; (S)-dihydroorotate from bicarbonate: step 1/3.</text>
</comment>
<comment type="subunit">
    <text evidence="1">Composed of two chains; the small (or glutamine) chain promotes the hydrolysis of glutamine to ammonia, which is used by the large (or ammonia) chain to synthesize carbamoyl phosphate. Tetramer of heterodimers (alpha,beta)4.</text>
</comment>
<comment type="domain">
    <text evidence="1">The large subunit is composed of 2 ATP-grasp domains that are involved in binding the 2 ATP molecules needed for carbamoyl phosphate synthesis. The N-terminal ATP-grasp domain (referred to as the carboxyphosphate synthetic component) catalyzes the ATP-dependent phosphorylation of hydrogencarbonate to carboxyphosphate and the subsequent nucleophilic attack by ammonia to form a carbamate intermediate. The C-terminal ATP-grasp domain (referred to as the carbamoyl phosphate synthetic component) then catalyzes the phosphorylation of carbamate with the second ATP to form the end product carbamoyl phosphate. The reactive and unstable enzyme intermediates are sequentially channeled from one active site to the next through the interior of the protein over a distance of at least 96 A.</text>
</comment>
<comment type="similarity">
    <text evidence="1">Belongs to the CarB family.</text>
</comment>
<keyword id="KW-0028">Amino-acid biosynthesis</keyword>
<keyword id="KW-0055">Arginine biosynthesis</keyword>
<keyword id="KW-0067">ATP-binding</keyword>
<keyword id="KW-0436">Ligase</keyword>
<keyword id="KW-0460">Magnesium</keyword>
<keyword id="KW-0464">Manganese</keyword>
<keyword id="KW-0479">Metal-binding</keyword>
<keyword id="KW-0547">Nucleotide-binding</keyword>
<keyword id="KW-0665">Pyrimidine biosynthesis</keyword>
<keyword id="KW-1185">Reference proteome</keyword>
<keyword id="KW-0677">Repeat</keyword>
<protein>
    <recommendedName>
        <fullName evidence="1">Carbamoyl phosphate synthase large chain</fullName>
        <ecNumber evidence="1">6.3.4.16</ecNumber>
        <ecNumber evidence="1">6.3.5.5</ecNumber>
    </recommendedName>
    <alternativeName>
        <fullName evidence="1">Carbamoyl phosphate synthetase ammonia chain</fullName>
    </alternativeName>
</protein>
<name>CARB_HAEDU</name>